<protein>
    <recommendedName>
        <fullName evidence="2">Spike glycoprotein</fullName>
        <shortName evidence="2">S glycoprotein</shortName>
    </recommendedName>
    <alternativeName>
        <fullName evidence="2">E2</fullName>
    </alternativeName>
    <alternativeName>
        <fullName evidence="2">Peplomer protein</fullName>
    </alternativeName>
    <component>
        <recommendedName>
            <fullName evidence="2">Spike protein S1</fullName>
        </recommendedName>
    </component>
    <component>
        <recommendedName>
            <fullName evidence="2">Spike protein S2</fullName>
        </recommendedName>
    </component>
    <component>
        <recommendedName>
            <fullName evidence="2">Spike protein S2'</fullName>
        </recommendedName>
    </component>
</protein>
<proteinExistence type="evidence at protein level"/>
<dbReference type="EMBL" id="L14643">
    <property type="protein sequence ID" value="AAA03055.1"/>
    <property type="molecule type" value="Genomic_RNA"/>
</dbReference>
<dbReference type="EMBL" id="S62886">
    <property type="protein sequence ID" value="AAB27260.2"/>
    <property type="status" value="ALT_SEQ"/>
    <property type="molecule type" value="Genomic_RNA"/>
</dbReference>
<dbReference type="EMBL" id="Z21849">
    <property type="protein sequence ID" value="CAA79896.1"/>
    <property type="molecule type" value="Genomic_RNA"/>
</dbReference>
<dbReference type="EMBL" id="Z32768">
    <property type="protein sequence ID" value="CAA83660.1"/>
    <property type="molecule type" value="Genomic_RNA"/>
</dbReference>
<dbReference type="EMBL" id="Z32769">
    <property type="protein sequence ID" value="CAA83661.1"/>
    <property type="molecule type" value="Genomic_RNA"/>
</dbReference>
<dbReference type="EMBL" id="AY585228">
    <property type="protein sequence ID" value="AAT84354.1"/>
    <property type="molecule type" value="Genomic_RNA"/>
</dbReference>
<dbReference type="EMBL" id="AY391777">
    <property type="protein sequence ID" value="AAR01015.1"/>
    <property type="molecule type" value="Genomic_RNA"/>
</dbReference>
<dbReference type="PIR" id="A37474">
    <property type="entry name" value="A37474"/>
</dbReference>
<dbReference type="PIR" id="JQ2168">
    <property type="entry name" value="JQ2168"/>
</dbReference>
<dbReference type="PIR" id="S29998">
    <property type="entry name" value="S29998"/>
</dbReference>
<dbReference type="PIR" id="S44240">
    <property type="entry name" value="S44240"/>
</dbReference>
<dbReference type="PIR" id="S44241">
    <property type="entry name" value="S44241"/>
</dbReference>
<dbReference type="PDB" id="7M51">
    <property type="method" value="X-ray"/>
    <property type="resolution" value="1.80 A"/>
    <property type="chains" value="A=1232-1246"/>
</dbReference>
<dbReference type="PDB" id="7PNM">
    <property type="method" value="EM"/>
    <property type="resolution" value="3.70 A"/>
    <property type="chains" value="A/B/C=14-1263"/>
</dbReference>
<dbReference type="PDB" id="7PNQ">
    <property type="method" value="EM"/>
    <property type="resolution" value="3.70 A"/>
    <property type="chains" value="A/B/C=14-1262"/>
</dbReference>
<dbReference type="PDB" id="7PO5">
    <property type="method" value="EM"/>
    <property type="resolution" value="3.90 A"/>
    <property type="chains" value="A/B/C=14-1263"/>
</dbReference>
<dbReference type="PDB" id="8HQV">
    <property type="method" value="X-ray"/>
    <property type="resolution" value="1.40 A"/>
    <property type="chains" value="B=1344-1353"/>
</dbReference>
<dbReference type="PDB" id="8HR0">
    <property type="method" value="X-ray"/>
    <property type="resolution" value="3.34 A"/>
    <property type="chains" value="D=1344-1353"/>
</dbReference>
<dbReference type="PDB" id="8TZU">
    <property type="method" value="X-ray"/>
    <property type="resolution" value="2.90 A"/>
    <property type="chains" value="A/B/F=332-606"/>
</dbReference>
<dbReference type="PDBsum" id="7M51"/>
<dbReference type="PDBsum" id="7PNM"/>
<dbReference type="PDBsum" id="7PNQ"/>
<dbReference type="PDBsum" id="7PO5"/>
<dbReference type="PDBsum" id="8HQV"/>
<dbReference type="PDBsum" id="8HR0"/>
<dbReference type="PDBsum" id="8TZU"/>
<dbReference type="EMDB" id="EMD-13564"/>
<dbReference type="SMR" id="P36334"/>
<dbReference type="BindingDB" id="P36334"/>
<dbReference type="GlyCosmos" id="P36334">
    <property type="glycosylation" value="20 sites, No reported glycans"/>
</dbReference>
<dbReference type="ABCD" id="P36334">
    <property type="antibodies" value="17 sequenced antibodies"/>
</dbReference>
<dbReference type="SABIO-RK" id="P36334"/>
<dbReference type="Proteomes" id="UP000007552">
    <property type="component" value="Genome"/>
</dbReference>
<dbReference type="Proteomes" id="UP000180344">
    <property type="component" value="Genome"/>
</dbReference>
<dbReference type="GO" id="GO:0044173">
    <property type="term" value="C:host cell endoplasmic reticulum-Golgi intermediate compartment membrane"/>
    <property type="evidence" value="ECO:0007669"/>
    <property type="project" value="UniProtKB-SubCell"/>
</dbReference>
<dbReference type="GO" id="GO:0020002">
    <property type="term" value="C:host cell plasma membrane"/>
    <property type="evidence" value="ECO:0007669"/>
    <property type="project" value="UniProtKB-SubCell"/>
</dbReference>
<dbReference type="GO" id="GO:0016020">
    <property type="term" value="C:membrane"/>
    <property type="evidence" value="ECO:0000303"/>
    <property type="project" value="UniProtKB"/>
</dbReference>
<dbReference type="GO" id="GO:0019031">
    <property type="term" value="C:viral envelope"/>
    <property type="evidence" value="ECO:0000303"/>
    <property type="project" value="UniProtKB"/>
</dbReference>
<dbReference type="GO" id="GO:0055036">
    <property type="term" value="C:virion membrane"/>
    <property type="evidence" value="ECO:0007669"/>
    <property type="project" value="UniProtKB-SubCell"/>
</dbReference>
<dbReference type="GO" id="GO:0030246">
    <property type="term" value="F:carbohydrate binding"/>
    <property type="evidence" value="ECO:0000303"/>
    <property type="project" value="UniProtKB"/>
</dbReference>
<dbReference type="GO" id="GO:0046789">
    <property type="term" value="F:host cell surface receptor binding"/>
    <property type="evidence" value="ECO:0000304"/>
    <property type="project" value="UniProtKB"/>
</dbReference>
<dbReference type="GO" id="GO:0075509">
    <property type="term" value="P:endocytosis involved in viral entry into host cell"/>
    <property type="evidence" value="ECO:0007669"/>
    <property type="project" value="UniProtKB-UniRule"/>
</dbReference>
<dbReference type="GO" id="GO:0039654">
    <property type="term" value="P:fusion of virus membrane with host endosome membrane"/>
    <property type="evidence" value="ECO:0007669"/>
    <property type="project" value="UniProtKB-UniRule"/>
</dbReference>
<dbReference type="GO" id="GO:0019064">
    <property type="term" value="P:fusion of virus membrane with host plasma membrane"/>
    <property type="evidence" value="ECO:0000304"/>
    <property type="project" value="UniProtKB"/>
</dbReference>
<dbReference type="GO" id="GO:0046813">
    <property type="term" value="P:receptor-mediated virion attachment to host cell"/>
    <property type="evidence" value="ECO:0007669"/>
    <property type="project" value="UniProtKB-UniRule"/>
</dbReference>
<dbReference type="CDD" id="cd21485">
    <property type="entry name" value="HCoV-OC43-like_Spike_S1_RBD"/>
    <property type="match status" value="1"/>
</dbReference>
<dbReference type="CDD" id="cd22380">
    <property type="entry name" value="HKU1-CoV-like_Spike_SD1-2_S1-S2_S2"/>
    <property type="match status" value="1"/>
</dbReference>
<dbReference type="CDD" id="cd21625">
    <property type="entry name" value="MHV-like_Spike_S1_NTD"/>
    <property type="match status" value="1"/>
</dbReference>
<dbReference type="FunFam" id="1.20.5.300:FF:000003">
    <property type="entry name" value="Spike glycoprotein"/>
    <property type="match status" value="1"/>
</dbReference>
<dbReference type="FunFam" id="1.20.5.300:FF:000006">
    <property type="entry name" value="Spike glycoprotein"/>
    <property type="match status" value="1"/>
</dbReference>
<dbReference type="FunFam" id="2.60.120.960:FF:000002">
    <property type="entry name" value="Spike glycoprotein"/>
    <property type="match status" value="1"/>
</dbReference>
<dbReference type="FunFam" id="3.30.70.1840:FF:000003">
    <property type="entry name" value="Spike glycoprotein"/>
    <property type="match status" value="1"/>
</dbReference>
<dbReference type="Gene3D" id="1.20.5.300">
    <property type="match status" value="2"/>
</dbReference>
<dbReference type="Gene3D" id="3.30.70.1840">
    <property type="match status" value="1"/>
</dbReference>
<dbReference type="Gene3D" id="2.60.120.960">
    <property type="entry name" value="Spike glycoprotein, N-terminal domain"/>
    <property type="match status" value="1"/>
</dbReference>
<dbReference type="HAMAP" id="MF_04099">
    <property type="entry name" value="BETA_CORONA_SPIKE"/>
    <property type="match status" value="1"/>
</dbReference>
<dbReference type="InterPro" id="IPR032500">
    <property type="entry name" value="bCoV_S1_N"/>
</dbReference>
<dbReference type="InterPro" id="IPR042578">
    <property type="entry name" value="BETA_CORONA_SPIKE"/>
</dbReference>
<dbReference type="InterPro" id="IPR043607">
    <property type="entry name" value="CoV_S1_C"/>
</dbReference>
<dbReference type="InterPro" id="IPR043473">
    <property type="entry name" value="S2_sf_CoV"/>
</dbReference>
<dbReference type="InterPro" id="IPR043002">
    <property type="entry name" value="Spike_N_sf"/>
</dbReference>
<dbReference type="InterPro" id="IPR044339">
    <property type="entry name" value="Spike_S1_NTD_MHV-like"/>
</dbReference>
<dbReference type="InterPro" id="IPR018548">
    <property type="entry name" value="Spike_S1_RBD_bCoV"/>
</dbReference>
<dbReference type="InterPro" id="IPR044372">
    <property type="entry name" value="Spike_S1_RBD_HCoV-OC43-like"/>
</dbReference>
<dbReference type="InterPro" id="IPR036326">
    <property type="entry name" value="Spike_S1_RBD_sf_bCoV"/>
</dbReference>
<dbReference type="InterPro" id="IPR002552">
    <property type="entry name" value="Spike_S2_CoV"/>
</dbReference>
<dbReference type="InterPro" id="IPR043614">
    <property type="entry name" value="Spike_S2_CoV_C"/>
</dbReference>
<dbReference type="InterPro" id="IPR044873">
    <property type="entry name" value="Spike_S2_CoV_HR1"/>
</dbReference>
<dbReference type="InterPro" id="IPR044874">
    <property type="entry name" value="Spike_S2_CoV_HR2"/>
</dbReference>
<dbReference type="Pfam" id="PF16451">
    <property type="entry name" value="bCoV_S1_N"/>
    <property type="match status" value="1"/>
</dbReference>
<dbReference type="Pfam" id="PF09408">
    <property type="entry name" value="bCoV_S1_RBD"/>
    <property type="match status" value="1"/>
</dbReference>
<dbReference type="Pfam" id="PF19209">
    <property type="entry name" value="CoV_S1_C"/>
    <property type="match status" value="1"/>
</dbReference>
<dbReference type="Pfam" id="PF01601">
    <property type="entry name" value="CoV_S2"/>
    <property type="match status" value="1"/>
</dbReference>
<dbReference type="Pfam" id="PF19214">
    <property type="entry name" value="CoV_S2_C"/>
    <property type="match status" value="1"/>
</dbReference>
<dbReference type="SUPFAM" id="SSF111474">
    <property type="entry name" value="Coronavirus S2 glycoprotein"/>
    <property type="match status" value="2"/>
</dbReference>
<dbReference type="SUPFAM" id="SSF143587">
    <property type="entry name" value="SARS receptor-binding domain-like"/>
    <property type="match status" value="1"/>
</dbReference>
<dbReference type="PROSITE" id="PS51921">
    <property type="entry name" value="BCOV_S1_CTD"/>
    <property type="match status" value="1"/>
</dbReference>
<dbReference type="PROSITE" id="PS51922">
    <property type="entry name" value="BCOV_S1_NTD"/>
    <property type="match status" value="1"/>
</dbReference>
<dbReference type="PROSITE" id="PS51923">
    <property type="entry name" value="COV_S2_HR1"/>
    <property type="match status" value="1"/>
</dbReference>
<dbReference type="PROSITE" id="PS51924">
    <property type="entry name" value="COV_S2_HR2"/>
    <property type="match status" value="1"/>
</dbReference>
<name>SPIKE_CVHOC</name>
<feature type="signal peptide" evidence="2">
    <location>
        <begin position="1"/>
        <end position="13"/>
    </location>
</feature>
<feature type="chain" id="PRO_0000037205" description="Spike glycoprotein">
    <location>
        <begin position="14"/>
        <end position="1353"/>
    </location>
</feature>
<feature type="chain" id="PRO_0000037206" description="Spike protein S1">
    <location>
        <begin position="14"/>
        <end position="758"/>
    </location>
</feature>
<feature type="chain" id="PRO_0000037207" description="Spike protein S2">
    <location>
        <begin position="759"/>
        <end position="1353"/>
    </location>
</feature>
<feature type="chain" id="PRO_0000444081" description="Spike protein S2'" evidence="2">
    <location>
        <begin position="904"/>
        <end position="1353"/>
    </location>
</feature>
<feature type="topological domain" description="Extracellular" evidence="2">
    <location>
        <begin position="14"/>
        <end position="1297"/>
    </location>
</feature>
<feature type="transmembrane region" description="Helical" evidence="2">
    <location>
        <begin position="1298"/>
        <end position="1318"/>
    </location>
</feature>
<feature type="topological domain" description="Cytoplasmic" evidence="2">
    <location>
        <begin position="1319"/>
        <end position="1353"/>
    </location>
</feature>
<feature type="domain" description="BetaCoV S1-NTD" evidence="4">
    <location>
        <begin position="15"/>
        <end position="302"/>
    </location>
</feature>
<feature type="domain" description="BetaCoV S1-CTD" evidence="3">
    <location>
        <begin position="333"/>
        <end position="607"/>
    </location>
</feature>
<feature type="region of interest" description="Fusion peptide 1" evidence="2">
    <location>
        <begin position="904"/>
        <end position="925"/>
    </location>
</feature>
<feature type="region of interest" description="Fusion peptide 2" evidence="2">
    <location>
        <begin position="923"/>
        <end position="943"/>
    </location>
</feature>
<feature type="region of interest" description="Heptad repeat 1" evidence="2">
    <location>
        <begin position="1004"/>
        <end position="1054"/>
    </location>
</feature>
<feature type="region of interest" description="Heptad repeat 2" evidence="2">
    <location>
        <begin position="1248"/>
        <end position="1286"/>
    </location>
</feature>
<feature type="coiled-coil region" evidence="2">
    <location>
        <begin position="1033"/>
        <end position="1077"/>
    </location>
</feature>
<feature type="coiled-coil region" evidence="2">
    <location>
        <begin position="1259"/>
        <end position="1287"/>
    </location>
</feature>
<feature type="short sequence motif" description="KxHxx" evidence="2">
    <location>
        <begin position="1349"/>
        <end position="1353"/>
    </location>
</feature>
<feature type="site" description="Cleavage; by host" evidence="1">
    <location>
        <begin position="758"/>
        <end position="759"/>
    </location>
</feature>
<feature type="site" description="Cleavage" evidence="2">
    <location>
        <begin position="903"/>
        <end position="904"/>
    </location>
</feature>
<feature type="glycosylation site" description="N-linked (GlcNAc...) asparagine; by host" evidence="2">
    <location>
        <position position="59"/>
    </location>
</feature>
<feature type="glycosylation site" description="N-linked (GlcNAc...) asparagine; by host" evidence="2">
    <location>
        <position position="133"/>
    </location>
</feature>
<feature type="glycosylation site" description="N-linked (GlcNAc...) asparagine; by host" evidence="2">
    <location>
        <position position="146"/>
    </location>
</feature>
<feature type="glycosylation site" description="N-linked (GlcNAc...) asparagine; by host" evidence="2">
    <location>
        <position position="202"/>
    </location>
</feature>
<feature type="glycosylation site" description="N-linked (GlcNAc...) asparagine; by host" evidence="2">
    <location>
        <position position="363"/>
    </location>
</feature>
<feature type="glycosylation site" description="N-linked (GlcNAc...) asparagine; by host" evidence="2">
    <location>
        <position position="441"/>
    </location>
</feature>
<feature type="glycosylation site" description="N-linked (GlcNAc...) asparagine; by host" evidence="2">
    <location>
        <position position="496"/>
    </location>
</feature>
<feature type="glycosylation site" description="N-linked (GlcNAc...) asparagine; by host" evidence="2">
    <location>
        <position position="639"/>
    </location>
</feature>
<feature type="glycosylation site" description="N-linked (GlcNAc...) asparagine; by host" evidence="2">
    <location>
        <position position="666"/>
    </location>
</feature>
<feature type="glycosylation site" description="N-linked (GlcNAc...) asparagine; by host" evidence="2">
    <location>
        <position position="686"/>
    </location>
</feature>
<feature type="glycosylation site" description="N-linked (GlcNAc...) asparagine; by host" evidence="2">
    <location>
        <position position="704"/>
    </location>
</feature>
<feature type="glycosylation site" description="N-linked (GlcNAc...) asparagine; by host" evidence="2">
    <location>
        <position position="729"/>
    </location>
</feature>
<feature type="glycosylation site" description="N-linked (GlcNAc...) asparagine; by host" evidence="2">
    <location>
        <position position="778"/>
    </location>
</feature>
<feature type="glycosylation site" description="N-linked (GlcNAc...) asparagine; by host" evidence="2">
    <location>
        <position position="927"/>
    </location>
</feature>
<feature type="glycosylation site" description="N-linked (GlcNAc...) asparagine; by host" evidence="2">
    <location>
        <position position="1184"/>
    </location>
</feature>
<feature type="glycosylation site" description="N-linked (GlcNAc...) asparagine; by host" evidence="2">
    <location>
        <position position="1214"/>
    </location>
</feature>
<feature type="glycosylation site" description="N-linked (GlcNAc...) asparagine; by host" evidence="2">
    <location>
        <position position="1224"/>
    </location>
</feature>
<feature type="glycosylation site" description="N-linked (GlcNAc...) asparagine; by host" evidence="2">
    <location>
        <position position="1243"/>
    </location>
</feature>
<feature type="glycosylation site" description="N-linked (GlcNAc...) asparagine; by host" evidence="2">
    <location>
        <position position="1257"/>
    </location>
</feature>
<feature type="glycosylation site" description="N-linked (GlcNAc...) asparagine; by host" evidence="2">
    <location>
        <position position="1278"/>
    </location>
</feature>
<feature type="disulfide bond" evidence="4">
    <location>
        <begin position="21"/>
        <end position="169"/>
    </location>
</feature>
<feature type="disulfide bond" evidence="4">
    <location>
        <begin position="164"/>
        <end position="197"/>
    </location>
</feature>
<feature type="disulfide bond" evidence="4">
    <location>
        <begin position="176"/>
        <end position="256"/>
    </location>
</feature>
<feature type="disulfide bond" evidence="4">
    <location>
        <begin position="290"/>
        <end position="300"/>
    </location>
</feature>
<feature type="disulfide bond" evidence="3">
    <location>
        <begin position="335"/>
        <end position="360"/>
    </location>
</feature>
<feature type="disulfide bond" evidence="3">
    <location>
        <begin position="378"/>
        <end position="431"/>
    </location>
</feature>
<feature type="disulfide bond" evidence="3">
    <location>
        <begin position="390"/>
        <end position="605"/>
    </location>
</feature>
<feature type="disulfide bond" evidence="2">
    <location>
        <begin position="928"/>
        <end position="939"/>
    </location>
</feature>
<feature type="sequence variant" description="In strain: Isolate VA.">
    <original>TAF</original>
    <variation>MAL</variation>
    <location>
        <begin position="11"/>
        <end position="13"/>
    </location>
</feature>
<feature type="sequence variant" description="In strain: Isolate VA.">
    <original>SDN</original>
    <variation>TVA</variation>
    <location>
        <begin position="23"/>
        <end position="25"/>
    </location>
</feature>
<feature type="sequence variant" description="In strain: Isolate CU.">
    <original>SDN</original>
    <variation>TVS</variation>
    <location>
        <begin position="23"/>
        <end position="25"/>
    </location>
</feature>
<feature type="sequence variant" description="In strain: Isolate AT and Isolate ATCC VR-759.">
    <original>N</original>
    <variation>TSY</variation>
    <location>
        <position position="25"/>
    </location>
</feature>
<feature type="sequence variant" description="In strain: Isolate CU.">
    <original>K</original>
    <variation>I</variation>
    <location>
        <position position="29"/>
    </location>
</feature>
<feature type="sequence variant" description="In strain: Isolate VA.">
    <original>K</original>
    <variation>V</variation>
    <location>
        <position position="29"/>
    </location>
</feature>
<feature type="sequence variant" description="In strain: Isolate VA.">
    <original>PPPI</original>
    <variation>VPST</variation>
    <location>
        <begin position="33"/>
        <end position="36"/>
    </location>
</feature>
<feature type="sequence variant" description="In strain: Isolate CU.">
    <original>PPP</original>
    <variation>APS</variation>
    <location>
        <begin position="33"/>
        <end position="35"/>
    </location>
</feature>
<feature type="sequence variant" description="In strain: Isolate CU and Isolate VA.">
    <original>T</original>
    <variation>I</variation>
    <location>
        <position position="40"/>
    </location>
</feature>
<feature type="sequence variant" description="In strain: Isolate AT.">
    <original>L</original>
    <variation>F</variation>
    <location>
        <position position="62"/>
    </location>
</feature>
<feature type="sequence variant" description="In strain: Isolate AT, Isolate CU and Isolate VA.">
    <original>F</original>
    <variation>L</variation>
    <location>
        <position position="63"/>
    </location>
</feature>
<feature type="sequence variant" description="In strain: Isolate CU and Isolate VA.">
    <original>SV</original>
    <variation>TL</variation>
    <location>
        <begin position="83"/>
        <end position="84"/>
    </location>
</feature>
<feature type="sequence variant" description="In strain: Isolate VA.">
    <original>D</original>
    <variation>H</variation>
    <location>
        <position position="115"/>
    </location>
</feature>
<feature type="sequence variant" description="In strain: Isolate CU.">
    <original>D</original>
    <variation>K</variation>
    <location>
        <position position="115"/>
    </location>
</feature>
<feature type="sequence variant" description="In strain: Isolate AT, Isolate CU and Isolate VA.">
    <original>R</original>
    <variation>G</variation>
    <location>
        <position position="116"/>
    </location>
</feature>
<feature type="sequence variant" description="In strain: Isolate CU and Isolate VA.">
    <original>RTINSTQDG</original>
    <variation>HTTNL</variation>
    <location>
        <begin position="143"/>
        <end position="151"/>
    </location>
</feature>
<feature type="sequence variant" description="In strain: Isolate AT and Isolate ATCC VR-759.">
    <original>D</original>
    <variation>Y</variation>
    <location>
        <position position="152"/>
    </location>
</feature>
<feature type="sequence variant" description="In strain: Isolate CU and Isolate VA.">
    <original>V</original>
    <variation>I</variation>
    <location>
        <position position="161"/>
    </location>
</feature>
<feature type="sequence variant" description="In strain: Isolate CU and Isolate VA.">
    <original>N</original>
    <variation>T</variation>
    <location>
        <position position="167"/>
    </location>
</feature>
<feature type="sequence variant" description="In strain: Isolate CU.">
    <original>Q</original>
    <variation>H</variation>
    <location>
        <position position="173"/>
    </location>
</feature>
<feature type="sequence variant" description="In strain: Isolate VA.">
    <original>Q</original>
    <variation>N</variation>
    <location>
        <position position="173"/>
    </location>
</feature>
<feature type="sequence variant" description="In strain: Isolate CU and Isolate VA.">
    <original>HRK</original>
    <variation>RRV</variation>
    <location>
        <begin position="183"/>
        <end position="185"/>
    </location>
</feature>
<feature type="sequence variant" description="In strain: Isolate CU and Isolate VA.">
    <original>L</original>
    <variation>W</variation>
    <location>
        <position position="190"/>
    </location>
</feature>
<feature type="sequence variant" description="In strain: Isolate VA.">
    <original>T</original>
    <variation>I</variation>
    <location>
        <position position="222"/>
    </location>
</feature>
<feature type="sequence variant" description="In strain: Isolate CU and Isolate VA.">
    <original>MA</original>
    <variation>TV</variation>
    <location>
        <begin position="244"/>
        <end position="245"/>
    </location>
</feature>
<feature type="sequence variant" description="In strain: Isolate VA.">
    <original>H</original>
    <variation>Y</variation>
    <location>
        <position position="248"/>
    </location>
</feature>
<feature type="sequence variant" description="In strain: Isolate CU.">
    <original>M</original>
    <variation>L</variation>
    <location>
        <position position="252"/>
    </location>
</feature>
<feature type="sequence variant" description="In strain: Isolate CU, Isolate ATCC VR-759 and Isolate VA.">
    <original>KL</original>
    <variation>AM</variation>
    <location>
        <begin position="259"/>
        <end position="260"/>
    </location>
</feature>
<feature type="sequence variant" description="In strain: Isolate AT and Isolate ATCC VR-759.">
    <original>L</original>
    <variation>VKNGF</variation>
    <location>
        <position position="260"/>
    </location>
</feature>
<feature type="sequence variant" description="In strain: Isolate CU and Isolate VA.">
    <original>R</original>
    <variation>K</variation>
    <location>
        <position position="272"/>
    </location>
</feature>
<feature type="sequence variant" description="In strain: Isolate CU and Isolate VA.">
    <original>I</original>
    <variation>V</variation>
    <location>
        <position position="283"/>
    </location>
</feature>
<feature type="sequence variant" description="In strain: Isolate AT, Isolate ATCC VR-759, Isolate CU and Isolate VA.">
    <original>E</original>
    <variation>V</variation>
    <location>
        <position position="288"/>
    </location>
</feature>
<feature type="sequence variant" description="In strain: Isolate CU and Isolate VA.">
    <original>M</original>
    <variation>K</variation>
    <location>
        <position position="291"/>
    </location>
</feature>
<feature type="sequence variant" description="In strain: Isolate CU and Isolate VA.">
    <original>Q</original>
    <variation>L</variation>
    <location>
        <position position="303"/>
    </location>
</feature>
<feature type="sequence variant" description="In strain: Isolate CU and Isolate VA.">
    <original>P</original>
    <variation>S</variation>
    <location>
        <position position="308"/>
    </location>
</feature>
<feature type="sequence variant" description="In strain: Isolate CU and Isolate VA.">
    <original>K</original>
    <variation>I</variation>
    <location>
        <position position="329"/>
    </location>
</feature>
<feature type="sequence variant" description="In strain: Isolate ATCC VR-759.">
    <original>P</original>
    <variation>L</variation>
    <location>
        <position position="330"/>
    </location>
</feature>
<feature type="sequence variant" description="In strain: Isolate CU and Isolate VA.">
    <original>N</original>
    <variation>D</variation>
    <location>
        <position position="334"/>
    </location>
</feature>
<feature type="sequence variant" description="In strain: Isolate VA.">
    <original>T</original>
    <variation>I</variation>
    <location>
        <position position="451"/>
    </location>
</feature>
<feature type="sequence variant" description="In strain: Isolate CU and Isolate VA.">
    <original>K</original>
    <variation>R</variation>
    <location>
        <position position="454"/>
    </location>
</feature>
<feature type="sequence variant" description="In strain: Isolate CU and Isolate VA.">
    <original>IED</original>
    <variation>TEQ</variation>
    <location>
        <begin position="459"/>
        <end position="461"/>
    </location>
</feature>
<feature type="sequence variant" description="In strain: Isolate CU and Isolate VA.">
    <original>R</original>
    <variation>Q</variation>
    <location>
        <position position="467"/>
    </location>
</feature>
<feature type="sequence variant" description="In strain: Isolate CU.">
    <original>AGVLTN</original>
    <variation>VGVFTH</variation>
    <location>
        <begin position="469"/>
        <end position="474"/>
    </location>
</feature>
<feature type="sequence variant" description="In strain: Isolate VA.">
    <original>LTN</original>
    <variation>FTD</variation>
    <location>
        <begin position="472"/>
        <end position="474"/>
    </location>
</feature>
<feature type="sequence variant" description="In strain: Isolate CU and Isolate VA.">
    <original>K</original>
    <variation>T</variation>
    <location>
        <position position="488"/>
    </location>
</feature>
<feature type="sequence variant" description="In strain: Isolate CU and Isolate VA.">
    <original>N</original>
    <variation>D</variation>
    <location>
        <position position="496"/>
    </location>
</feature>
<feature type="sequence variant" description="In strain: Isolate CU and Isolate VA.">
    <original>CVGSGPGKNNGIGTCPAGTNYLTCDNLCTPDPITFTGT</original>
    <variation>LCVGNGPGIDAGYKNSGIGTCPAGTNYLTCHNAAQCDCLCTPDPITSKSTGP</variation>
    <location>
        <begin position="499"/>
        <end position="536"/>
    </location>
</feature>
<feature type="sequence variant" description="In strain: Isolate AT and Isolate ATCC VR-759.">
    <original>F</original>
    <variation>FKA</variation>
    <location>
        <position position="533"/>
    </location>
</feature>
<feature type="sequence variant" description="In strain: Isolate CU and Isolate VA.">
    <original>S</original>
    <variation>Y</variation>
    <location>
        <position position="544"/>
    </location>
</feature>
<feature type="sequence variant" description="In strain: Isolate CU and Isolate VA.">
    <original>V</original>
    <variation>I</variation>
    <location>
        <position position="557"/>
    </location>
</feature>
<feature type="sequence variant" description="In strain: Isolate AT, Isolate CU and Isolate VA.">
    <original>S</original>
    <variation>P</variation>
    <location>
        <position position="566"/>
    </location>
</feature>
<feature type="sequence variant" description="In strain: Isolate CU and Isolate VA.">
    <original>R</original>
    <variation>Q</variation>
    <location>
        <position position="570"/>
    </location>
</feature>
<feature type="sequence variant" description="In strain: Isolate CU and Isolate VA.">
    <original>A</original>
    <variation>V</variation>
    <location>
        <position position="579"/>
    </location>
</feature>
<feature type="sequence variant" description="In strain: Isolate CU and Isolate VA.">
    <original>K</original>
    <variation>R</variation>
    <location>
        <position position="587"/>
    </location>
</feature>
<feature type="sequence variant" description="In strain: Isolate CU and Isolate VA.">
    <original>L</original>
    <variation>T</variation>
    <location>
        <position position="603"/>
    </location>
</feature>
<feature type="sequence variant" description="In strain: Isolate CU and Isolate VA.">
    <original>A</original>
    <variation>S</variation>
    <location>
        <position position="612"/>
    </location>
</feature>
<feature type="sequence variant" description="In strain: Isolate CU and Isolate VA.">
    <original>L</original>
    <variation>T</variation>
    <location>
        <position position="630"/>
    </location>
</feature>
<feature type="sequence variant" description="In strain: Isolate CU and Isolate VA.">
    <original>T</original>
    <variation>P</variation>
    <location>
        <position position="641"/>
    </location>
</feature>
<feature type="sequence variant" description="In strain: Isolate CU and Isolate VA.">
    <original>II</original>
    <variation>LT</variation>
    <location>
        <begin position="664"/>
        <end position="665"/>
    </location>
</feature>
<feature type="sequence variant" description="In strain: Isolate AT and Isolate ATCC VR-759.">
    <original>I</original>
    <variation>T</variation>
    <location>
        <position position="665"/>
    </location>
</feature>
<feature type="sequence variant" description="In strain: Isolate AT.">
    <original>F</original>
    <variation>S</variation>
    <location>
        <position position="694"/>
    </location>
</feature>
<feature type="sequence variant" description="In strain: Isolate CU.">
    <original>N</original>
    <variation>S</variation>
    <location>
        <position position="700"/>
    </location>
</feature>
<feature type="sequence variant" description="In strain: Isolate CU and Isolate VA.">
    <original>SLT</original>
    <variation>TLS</variation>
    <location>
        <begin position="706"/>
        <end position="708"/>
    </location>
</feature>
<feature type="sequence variant" description="In strain: Isolate CU and Isolate VA.">
    <original>Y</original>
    <variation>D</variation>
    <location>
        <position position="728"/>
    </location>
</feature>
<feature type="sequence variant" description="In strain: Isolate CU.">
    <original>AIS</original>
    <variation>SSV</variation>
    <location>
        <begin position="732"/>
        <end position="734"/>
    </location>
</feature>
<feature type="sequence variant" description="In strain: Isolate VA.">
    <original>IS</original>
    <variation>SA</variation>
    <location>
        <begin position="733"/>
        <end position="734"/>
    </location>
</feature>
<feature type="sequence variant" description="In strain: Isolate CU and Isolate VA.">
    <original>KN</original>
    <variation>TK</variation>
    <location>
        <begin position="752"/>
        <end position="753"/>
    </location>
</feature>
<feature type="sequence variant" description="In strain: Isolate CU and Isolate VA.">
    <original>G</original>
    <variation>R</variation>
    <location>
        <position position="758"/>
    </location>
</feature>
<feature type="sequence variant" description="In strain: Isolate VA.">
    <original>P</original>
    <variation>H</variation>
    <location>
        <position position="783"/>
    </location>
</feature>
<feature type="sequence variant" description="In strain: Isolate AT, Isolate ATCC VR-759, Isolate CU and Isolate VA.">
    <original>V</original>
    <variation>E</variation>
    <location>
        <position position="802"/>
    </location>
</feature>
<feature type="sequence variant" description="In strain: Isolate CU and Isolate VA.">
    <original>A</original>
    <variation>S</variation>
    <location>
        <position position="817"/>
    </location>
</feature>
<feature type="sequence variant" description="In strain: Isolate VA.">
    <original>Y</original>
    <variation>C</variation>
    <location>
        <position position="824"/>
    </location>
</feature>
<feature type="sequence variant" description="In strain: Isolate AT.">
    <original>E</original>
    <variation>G</variation>
    <location>
        <position position="833"/>
    </location>
</feature>
<feature type="sequence variant" description="In strain: Isolate VA.">
    <original>I</original>
    <variation>V</variation>
    <location>
        <position position="884"/>
    </location>
</feature>
<feature type="sequence variant" description="In strain: Isolate CU.">
    <original>E</original>
    <variation>C</variation>
    <location>
        <position position="896"/>
    </location>
</feature>
<feature type="sequence variant" description="In strain: Isolate CU and Isolate VA.">
    <original>SKA</original>
    <variation>NKV</variation>
    <location>
        <begin position="898"/>
        <end position="900"/>
    </location>
</feature>
<feature type="sequence variant" description="In strain: Isolate CU and Isolate VA.">
    <original>D</original>
    <variation>S</variation>
    <location>
        <position position="912"/>
    </location>
</feature>
<feature type="sequence variant" description="In strain: Isolate VA.">
    <original>K</original>
    <variation>R</variation>
    <location>
        <position position="915"/>
    </location>
</feature>
<feature type="sequence variant" description="In strain: Isolate VA.">
    <original>E</original>
    <variation>G</variation>
    <location>
        <position position="933"/>
    </location>
</feature>
<feature type="sequence variant" description="In strain: Isolate CU and Isolate VA.">
    <original>K</original>
    <variation>N</variation>
    <location>
        <position position="944"/>
    </location>
</feature>
<feature type="sequence variant" description="In strain: Isolate VA.">
    <original>E</original>
    <variation>D</variation>
    <location>
        <position position="955"/>
    </location>
</feature>
<feature type="sequence variant" description="In strain: Isolate CU.">
    <original>E</original>
    <variation>V</variation>
    <location>
        <position position="955"/>
    </location>
</feature>
<feature type="sequence variant" description="In strain: Isolate VA.">
    <original>S</original>
    <variation>N</variation>
    <location>
        <position position="969"/>
    </location>
</feature>
<feature type="sequence variant" description="In strain: Isolate ATCC VR-759.">
    <original>P</original>
    <variation>L</variation>
    <location>
        <position position="973"/>
    </location>
</feature>
<feature type="sequence variant" description="In strain: Isolate CU and Isolate VA.">
    <original>T</original>
    <variation>S</variation>
    <location>
        <position position="975"/>
    </location>
</feature>
<feature type="sequence variant" description="In strain: Isolate CU and Isolate VA.">
    <original>L</original>
    <variation>I</variation>
    <location>
        <position position="993"/>
    </location>
</feature>
<feature type="sequence variant" description="In strain: Isolate CU.">
    <original>N</original>
    <variation>S</variation>
    <location>
        <position position="1012"/>
    </location>
</feature>
<feature type="sequence variant" description="In strain: Isolate AT, Isolate CU and Isolate VA.">
    <original>Y</original>
    <variation>D</variation>
    <location>
        <position position="1016"/>
    </location>
</feature>
<feature type="sequence variant" description="In strain: Isolate VA.">
    <original>N</original>
    <variation>D</variation>
    <location>
        <position position="1039"/>
    </location>
</feature>
<feature type="sequence variant" description="In strain: Isolate CU.">
    <original>S</original>
    <variation>G</variation>
    <location>
        <position position="1058"/>
    </location>
</feature>
<feature type="sequence variant" description="In strain: Isolate CU and Isolate VA.">
    <original>A</original>
    <variation>S</variation>
    <location>
        <position position="1059"/>
    </location>
</feature>
<feature type="sequence variant" description="In strain: Isolate CU and Isolate VA.">
    <original>E</original>
    <variation>Q</variation>
    <location>
        <position position="1074"/>
    </location>
</feature>
<feature type="sequence variant" description="In strain: Isolate VA.">
    <original>N</original>
    <variation>D</variation>
    <location>
        <position position="1089"/>
    </location>
</feature>
<feature type="sequence variant" description="In strain: Isolate CU and Isolate VA.">
    <original>R</original>
    <variation>K</variation>
    <location>
        <position position="1160"/>
    </location>
</feature>
<feature type="sequence variant" description="In strain: Isolate CU and Isolate VA.">
    <original>Y</original>
    <variation>F</variation>
    <location>
        <position position="1189"/>
    </location>
</feature>
<feature type="sequence variant" description="In strain: Isolate VA.">
    <original>G</original>
    <variation>R</variation>
    <location>
        <position position="1193"/>
    </location>
</feature>
<feature type="sequence variant" description="In strain: Isolate AT.">
    <original>P</original>
    <variation>L</variation>
    <location>
        <position position="1197"/>
    </location>
</feature>
<feature type="sequence variant" description="In strain: Isolate CU and Isolate VA.">
    <original>E</original>
    <variation>G</variation>
    <location>
        <position position="1202"/>
    </location>
</feature>
<feature type="sequence variant" description="In strain: Isolate AT.">
    <original>C</original>
    <variation>W</variation>
    <location>
        <position position="1211"/>
    </location>
</feature>
<feature type="sequence variant" description="In strain: Isolate CU and Isolate VA.">
    <original>Y</original>
    <variation>D</variation>
    <location>
        <position position="1220"/>
    </location>
</feature>
<feature type="sequence variant" description="In strain: Isolate CU and Isolate VA.">
    <original>TSI</original>
    <variation>IST</variation>
    <location>
        <begin position="1225"/>
        <end position="1227"/>
    </location>
</feature>
<feature type="sequence variant" description="In strain: Isolate CU.">
    <original>P</original>
    <variation>H</variation>
    <location>
        <position position="1231"/>
    </location>
</feature>
<feature type="sequence variant" description="In strain: Isolate VA.">
    <original>S</original>
    <variation>L</variation>
    <location>
        <position position="1246"/>
    </location>
</feature>
<feature type="sequence variant" description="In strain: Isolate CU and Isolate VA.">
    <original>V</original>
    <variation>D</variation>
    <location>
        <position position="1265"/>
    </location>
</feature>
<feature type="sequence variant" description="In strain: Isolate CU and Isolate VA.">
    <original>CL</original>
    <variation>GF</variation>
    <location>
        <begin position="1305"/>
        <end position="1306"/>
    </location>
</feature>
<feature type="sequence variant" description="In strain: Isolate CU.">
    <original>K</original>
    <variation>I</variation>
    <location>
        <position position="1331"/>
    </location>
</feature>
<feature type="sequence variant" description="In strain: Isolate CU and Isolate VA.">
    <original>Y</original>
    <variation>H</variation>
    <location>
        <position position="1342"/>
    </location>
</feature>
<feature type="sequence variant" description="In strain: Isolate VA.">
    <original>DD</original>
    <variation>EG</variation>
    <location>
        <begin position="1352"/>
        <end position="1353"/>
    </location>
</feature>
<feature type="helix" evidence="6">
    <location>
        <begin position="337"/>
        <end position="341"/>
    </location>
</feature>
<feature type="strand" evidence="6">
    <location>
        <begin position="344"/>
        <end position="346"/>
    </location>
</feature>
<feature type="helix" evidence="6">
    <location>
        <begin position="349"/>
        <end position="351"/>
    </location>
</feature>
<feature type="strand" evidence="6">
    <location>
        <begin position="353"/>
        <end position="357"/>
    </location>
</feature>
<feature type="helix" evidence="6">
    <location>
        <begin position="364"/>
        <end position="370"/>
    </location>
</feature>
<feature type="strand" evidence="6">
    <location>
        <begin position="371"/>
        <end position="381"/>
    </location>
</feature>
<feature type="turn" evidence="6">
    <location>
        <begin position="386"/>
        <end position="388"/>
    </location>
</feature>
<feature type="strand" evidence="6">
    <location>
        <begin position="394"/>
        <end position="400"/>
    </location>
</feature>
<feature type="helix" evidence="6">
    <location>
        <begin position="406"/>
        <end position="409"/>
    </location>
</feature>
<feature type="helix" evidence="6">
    <location>
        <begin position="416"/>
        <end position="420"/>
    </location>
</feature>
<feature type="strand" evidence="6">
    <location>
        <begin position="426"/>
        <end position="428"/>
    </location>
</feature>
<feature type="strand" evidence="6">
    <location>
        <begin position="430"/>
        <end position="438"/>
    </location>
</feature>
<feature type="helix" evidence="6">
    <location>
        <begin position="439"/>
        <end position="441"/>
    </location>
</feature>
<feature type="helix" evidence="6">
    <location>
        <begin position="451"/>
        <end position="455"/>
    </location>
</feature>
<feature type="helix" evidence="6">
    <location>
        <begin position="460"/>
        <end position="463"/>
    </location>
</feature>
<feature type="turn" evidence="6">
    <location>
        <begin position="467"/>
        <end position="469"/>
    </location>
</feature>
<feature type="strand" evidence="6">
    <location>
        <begin position="470"/>
        <end position="472"/>
    </location>
</feature>
<feature type="strand" evidence="6">
    <location>
        <begin position="476"/>
        <end position="481"/>
    </location>
</feature>
<feature type="turn" evidence="6">
    <location>
        <begin position="496"/>
        <end position="498"/>
    </location>
</feature>
<feature type="turn" evidence="6">
    <location>
        <begin position="530"/>
        <end position="532"/>
    </location>
</feature>
<feature type="strand" evidence="6">
    <location>
        <begin position="540"/>
        <end position="543"/>
    </location>
</feature>
<feature type="helix" evidence="6">
    <location>
        <begin position="559"/>
        <end position="561"/>
    </location>
</feature>
<feature type="strand" evidence="6">
    <location>
        <begin position="562"/>
        <end position="564"/>
    </location>
</feature>
<feature type="turn" evidence="6">
    <location>
        <begin position="565"/>
        <end position="567"/>
    </location>
</feature>
<feature type="helix" evidence="6">
    <location>
        <begin position="571"/>
        <end position="573"/>
    </location>
</feature>
<feature type="strand" evidence="6">
    <location>
        <begin position="574"/>
        <end position="581"/>
    </location>
</feature>
<feature type="strand" evidence="6">
    <location>
        <begin position="583"/>
        <end position="596"/>
    </location>
</feature>
<feature type="strand" evidence="6">
    <location>
        <begin position="602"/>
        <end position="605"/>
    </location>
</feature>
<feature type="helix" evidence="5">
    <location>
        <begin position="1233"/>
        <end position="1241"/>
    </location>
</feature>
<organismHost>
    <name type="scientific">Homo sapiens</name>
    <name type="common">Human</name>
    <dbReference type="NCBI Taxonomy" id="9606"/>
</organismHost>
<organism>
    <name type="scientific">Human coronavirus OC43</name>
    <name type="common">HCoV-OC43</name>
    <dbReference type="NCBI Taxonomy" id="31631"/>
    <lineage>
        <taxon>Viruses</taxon>
        <taxon>Riboviria</taxon>
        <taxon>Orthornavirae</taxon>
        <taxon>Pisuviricota</taxon>
        <taxon>Pisoniviricetes</taxon>
        <taxon>Nidovirales</taxon>
        <taxon>Cornidovirineae</taxon>
        <taxon>Coronaviridae</taxon>
        <taxon>Orthocoronavirinae</taxon>
        <taxon>Betacoronavirus</taxon>
        <taxon>Embecovirus</taxon>
        <taxon>Betacoronavirus 1</taxon>
    </lineage>
</organism>
<reference key="1">
    <citation type="journal article" date="1993" name="J. Gen. Virol.">
        <title>Molecular characterization of the S protein gene of human coronavirus OC43.</title>
        <authorList>
            <person name="Mounir S."/>
            <person name="Talbot P.J."/>
        </authorList>
    </citation>
    <scope>NUCLEOTIDE SEQUENCE [GENOMIC RNA]</scope>
</reference>
<reference key="2">
    <citation type="journal article" date="1993" name="Virology">
        <title>Structural and functional analysis of the surface protein of human coronavirus OC43.</title>
        <authorList>
            <person name="Kuenkel F."/>
            <person name="Herrler G."/>
        </authorList>
    </citation>
    <scope>NUCLEOTIDE SEQUENCE [GENOMIC RNA]</scope>
</reference>
<reference key="3">
    <citation type="journal article" date="1996" name="Arch. Virol.">
        <title>Structural and functional analysis of the S proteins of two human coronavirus OC43 strains adapted to growth in different cells.</title>
        <authorList>
            <person name="Kuenkel F."/>
            <person name="Herrler G."/>
        </authorList>
    </citation>
    <scope>NUCLEOTIDE SEQUENCE [GENOMIC RNA]</scope>
    <source>
        <strain>Isolate AT</strain>
        <strain>Isolate CU</strain>
        <strain>Isolate VA</strain>
    </source>
</reference>
<reference key="4">
    <citation type="journal article" date="2004" name="J. Virol.">
        <title>Human respiratory coronavirus OC43: genetic stability and neuroinvasion.</title>
        <authorList>
            <person name="St Jean J.R."/>
            <person name="Jacomy H."/>
            <person name="Desforges M."/>
            <person name="Vabret A."/>
            <person name="Freymuth F."/>
            <person name="Talbot P.J."/>
        </authorList>
    </citation>
    <scope>NUCLEOTIDE SEQUENCE [GENOMIC RNA]</scope>
    <source>
        <strain>Isolate ATCC VR-759</strain>
    </source>
</reference>
<reference key="5">
    <citation type="journal article" date="2005" name="J. Virol.">
        <title>Complete genomic sequence of human coronavirus OC43: molecular clock analysis suggests a relatively recent zoonotic coronavirus transmission event.</title>
        <authorList>
            <person name="Vijgen L."/>
            <person name="Keyaerts E."/>
            <person name="Moes E."/>
            <person name="Thoelen I."/>
            <person name="Wollants E."/>
            <person name="Lemey P."/>
            <person name="Vandamme A.M."/>
            <person name="Van Ranst M."/>
        </authorList>
    </citation>
    <scope>NUCLEOTIDE SEQUENCE [GENOMIC RNA]</scope>
    <source>
        <strain>Isolate ATCC VR-759</strain>
    </source>
</reference>
<reference key="6">
    <citation type="journal article" date="2001" name="Virology">
        <title>Coronavirus spike proteins in viral entry and pathogenesis.</title>
        <authorList>
            <person name="Gallagher T.M."/>
            <person name="Buchmeier M.J."/>
        </authorList>
    </citation>
    <scope>REVIEW</scope>
</reference>
<evidence type="ECO:0000250" key="1"/>
<evidence type="ECO:0000255" key="2">
    <source>
        <dbReference type="HAMAP-Rule" id="MF_04099"/>
    </source>
</evidence>
<evidence type="ECO:0000255" key="3">
    <source>
        <dbReference type="PROSITE-ProRule" id="PRU01269"/>
    </source>
</evidence>
<evidence type="ECO:0000255" key="4">
    <source>
        <dbReference type="PROSITE-ProRule" id="PRU01270"/>
    </source>
</evidence>
<evidence type="ECO:0007829" key="5">
    <source>
        <dbReference type="PDB" id="7M51"/>
    </source>
</evidence>
<evidence type="ECO:0007829" key="6">
    <source>
        <dbReference type="PDB" id="8TZU"/>
    </source>
</evidence>
<accession>P36334</accession>
<accession>Q66199</accession>
<accession>Q66290</accession>
<accession>Q66291</accession>
<accession>Q696Q6</accession>
<accession>Q6TNF9</accession>
<accession>Q86623</accession>
<comment type="function">
    <text>S1 attaches the virion to the cell membrane by interacting with sialic acid-containing cell receptors, initiating the infection.</text>
</comment>
<comment type="function">
    <molecule>Spike protein S1</molecule>
    <text evidence="2">Attaches the virion to the cell membrane by interacting with host receptor, initiating the infection.</text>
</comment>
<comment type="function">
    <molecule>Spike protein S2</molecule>
    <text evidence="2">Mediates fusion of the virion and cellular membranes by acting as a class I viral fusion protein. Under the current model, the protein has at least three conformational states: pre-fusion native state, pre-hairpin intermediate state, and post-fusion hairpin state. During viral and target cell membrane fusion, the coiled coil regions (heptad repeats) assume a trimer-of-hairpins structure, positioning the fusion peptide in close proximity to the C-terminal region of the ectodomain. The formation of this structure appears to drive apposition and subsequent fusion of viral and target cell membranes.</text>
</comment>
<comment type="function">
    <molecule>Spike protein S2'</molecule>
    <text evidence="2">Acts as a viral fusion peptide which is unmasked following S2 cleavage occurring upon virus endocytosis.</text>
</comment>
<comment type="subunit">
    <text evidence="2">Homotrimer; each monomer consists of a S1 and a S2 subunit. The resulting peplomers protrude from the virus surface as spikes.</text>
</comment>
<comment type="subcellular location">
    <subcellularLocation>
        <location evidence="2">Virion membrane</location>
        <topology evidence="2">Single-pass type I membrane protein</topology>
    </subcellularLocation>
    <subcellularLocation>
        <location evidence="2">Host endoplasmic reticulum-Golgi intermediate compartment membrane</location>
        <topology evidence="2">Single-pass type I membrane protein</topology>
    </subcellularLocation>
    <subcellularLocation>
        <location evidence="2">Host cell membrane</location>
        <topology evidence="2">Single-pass type I membrane protein</topology>
    </subcellularLocation>
    <text evidence="2">Accumulates in the endoplasmic reticulum-Golgi intermediate compartment, where it participates in virus particle assembly. Some S oligomers are transported to the host plasma membrane, where they may mediate cell-cell fusion.</text>
</comment>
<comment type="domain">
    <text evidence="2">Fusion peptide 1 (FP1) and fusion peptide 2 (FP2) function cooperatively and have a membrane-ordering effect on lipid headgroups and shallow hydrophobic regions of target bilayers. They are considered as two domains of an extended, bipartite FP. The membrane-ordering activity is calcium-dependent and also dependent on correct folding, which is maintained by an internal disulfide bond in FP2.</text>
</comment>
<comment type="PTM">
    <text evidence="2">Specific enzymatic cleavages in vivo yield mature proteins. The precursor is processed into S1 and S2 by host cell furin or another cellular protease to yield the mature S1 and S2 proteins. Additionally, a second cleavage leads to the release of a fusion peptide after viral attachment to host cell receptor.</text>
</comment>
<comment type="PTM">
    <text evidence="2">The cytoplasmic Cys-rich domain is palmitoylated. Spike glycoprotein is digested within host endosomes.</text>
</comment>
<comment type="similarity">
    <text evidence="2">Belongs to the betacoronaviruses spike protein family.</text>
</comment>
<comment type="sequence caution">
    <conflict type="miscellaneous discrepancy">
        <sequence resource="EMBL-CDS" id="AAB27260"/>
    </conflict>
    <text>Unknown reason.</text>
</comment>
<gene>
    <name evidence="2" type="primary">S</name>
    <name type="ORF">3</name>
</gene>
<keyword id="KW-0002">3D-structure</keyword>
<keyword id="KW-0175">Coiled coil</keyword>
<keyword id="KW-1015">Disulfide bond</keyword>
<keyword id="KW-1170">Fusion of virus membrane with host endosomal membrane</keyword>
<keyword id="KW-1168">Fusion of virus membrane with host membrane</keyword>
<keyword id="KW-0325">Glycoprotein</keyword>
<keyword id="KW-1032">Host cell membrane</keyword>
<keyword id="KW-1043">Host membrane</keyword>
<keyword id="KW-0945">Host-virus interaction</keyword>
<keyword id="KW-0449">Lipoprotein</keyword>
<keyword id="KW-0472">Membrane</keyword>
<keyword id="KW-0564">Palmitate</keyword>
<keyword id="KW-1185">Reference proteome</keyword>
<keyword id="KW-0732">Signal</keyword>
<keyword id="KW-0812">Transmembrane</keyword>
<keyword id="KW-1133">Transmembrane helix</keyword>
<keyword id="KW-1161">Viral attachment to host cell</keyword>
<keyword id="KW-0261">Viral envelope protein</keyword>
<keyword id="KW-1162">Viral penetration into host cytoplasm</keyword>
<keyword id="KW-0946">Virion</keyword>
<keyword id="KW-0843">Virulence</keyword>
<keyword id="KW-1160">Virus entry into host cell</keyword>
<sequence length="1353" mass="150089">MFLILLISLPTAFAVIGDLKCTSDNINDKDTGPPPISTDTVDVTNGLGTYYVLDRVYLNTTLFLNGYYPTSGSTYRNMALKGSVLLSRLWFKPPFLSDFINGIFAKVKNTKVIKDRVMYSEFPAITIGSTFVNTSYSVVVQPRTINSTQDGDNKLQGLLEVSVCQYNMCEYPQTICHPNLGNHRKELWHLDTGVVSCLYKRNFTYDVNADYLYFHFYQEGGTFYAYFTDTGVVTKFLFNVYLGMALSHYYVMPLTCNSKLTLEYWVTPLTSRQYLLAFNQDGIIFNAEDCMSDFMSEIKCKTQSIAPPTGVYELNGYTVQPIADVYRRKPNLPNCNIEAWLNDKSVPSPLNWERKTFSNCNFNMSSLMSFIQADSFTCNNIDAAKIYGMCFSSITIDKFAIPNGRKVDLQLGNLGYLQSFNYRIDTTATSCQLYYNLPAANVSVSRFNPSTWNKRFGFIEDSVFKPRPAGVLTNHDVVYAQHCFKAPKNFCPCKLNGSCVGSGPGKNNGIGTCPAGTNYLTCDNLCTPDPITFTGTYKCPQTKSLVGIGEHCSGLAVKSDYCGGNSCTCRPQAFLGWSADSCLQGDKCNIFANFILHDVNSGLTCSTDLQKANTDIILGVCVNYDLYGILGQGIFVEVNATYYNSWQNLLYDSNGNLYGFRDYIINRTFMIRSCYSGRVSAAFHANSSEPALLFRNIKCNYVFNNSLTRQLQPINYFDSYLGCVVNAYNSTAISVQTCDLTVGSGYCVDYSKNRRSRGAITTGYRFTNFEPFTVNSVNDSLEPVGGLYEIQIPSEFTIGNMVEFIQTSSPKVTIDCAAFVCGDYAACKSQLVEYGSFCDNINAILTEVNELLDTTQLQVANSLMNGVTLSTKLKDGVNFNVDDINFSPVLGCLGSECSKASSRSAIEDLLFDKVKLSDVGFVEAYNNCTGGAEIRDLICVQSYKGIKVLPPLLSENQISGYTLAATSASLFPPWTAAAGVPFYLNVQYRINGLGVTMDVLSQNQKLIANAFNNALYAIQEGFDATNSALVKIQAVVNANAEALNNLLQQLSNRFGAISASLQEILSRLDALEAEAQIDRLINGRLTALNAYVSQQLSDSTLVKFSAAQAMEKVNECVKSQSSRINFCGNGNHIISLVQNAPYGLYFIHFSYVPTKYVTARVSPGLCIAGDRGIAPKSGYFVNVNNTWMYTGSGYYYPEPITENNVVVMSTCAVNYTKAPYVMLNTSIPNLPDFKEELDQWFKNQTSVAPDLSLDYINVTFLDLQVEMNRLQEAIKVLNQSYINLKDIGTYEYYVKWPWYVWLLICLAGVAMLVLLFFICCCTGCGTSCFKKCGGCCDDYTGYQELVIKTSHDD</sequence>